<gene>
    <name evidence="4" type="primary">RPL35</name>
    <name evidence="5" type="ordered locus">At2g24090</name>
</gene>
<name>RK35_ARATH</name>
<feature type="transit peptide" description="Chloroplast" evidence="1">
    <location>
        <begin position="1"/>
        <end position="56"/>
    </location>
</feature>
<feature type="chain" id="PRO_0000435324" description="Large ribosomal subunit protein bL35c" evidence="1">
    <location>
        <begin position="57"/>
        <end position="145"/>
    </location>
</feature>
<sequence>MASLSMASVNVSFCHPLRSSSPKVSLRSSVHFATSLSSSHSISGLRAVLPLKISTVASPNSQKLHSFTVFAHKGYKMKTHKASAKRFRVTGRGKIVRRRSGKQHLLAKKNNKRKLRLSKMTEVNRSDYDNVIGALPYLKVNRKAT</sequence>
<comment type="subunit">
    <text evidence="4">Part of the 50S ribosomal subunit.</text>
</comment>
<comment type="interaction">
    <interactant intactId="EBI-4470631">
        <id>Q8VZ55</id>
    </interactant>
    <interactant intactId="EBI-4424361">
        <id>Q9SZI2</id>
        <label>NAP1;1</label>
    </interactant>
    <organismsDiffer>false</organismsDiffer>
    <experiments>4</experiments>
</comment>
<comment type="subcellular location">
    <subcellularLocation>
        <location evidence="1">Plastid</location>
        <location evidence="1">Chloroplast</location>
    </subcellularLocation>
</comment>
<comment type="disruption phenotype">
    <text evidence="2">Embryonic lethality. Embryo development arrested at the globular stage.</text>
</comment>
<comment type="similarity">
    <text evidence="4">Belongs to the bacterial ribosomal protein bL35 family.</text>
</comment>
<comment type="sequence caution" evidence="4">
    <conflict type="erroneous gene model prediction">
        <sequence resource="EMBL-CDS" id="AAC63677"/>
    </conflict>
</comment>
<comment type="sequence caution" evidence="4">
    <conflict type="erroneous gene model prediction">
        <sequence resource="EMBL-CDS" id="AAM15097"/>
    </conflict>
</comment>
<comment type="sequence caution" evidence="4">
    <conflict type="erroneous initiation">
        <sequence resource="EMBL-CDS" id="CAA60774"/>
    </conflict>
    <text>Truncated N-terminus.</text>
</comment>
<proteinExistence type="evidence at protein level"/>
<protein>
    <recommendedName>
        <fullName evidence="3">Large ribosomal subunit protein bL35c</fullName>
    </recommendedName>
    <alternativeName>
        <fullName evidence="4">50S ribosomal protein L35, chloroplastic</fullName>
    </alternativeName>
</protein>
<accession>Q8VZ55</accession>
<accession>O82237</accession>
<accession>Q9LWB6</accession>
<evidence type="ECO:0000255" key="1"/>
<evidence type="ECO:0000269" key="2">
    <source>
    </source>
</evidence>
<evidence type="ECO:0000303" key="3">
    <source>
    </source>
</evidence>
<evidence type="ECO:0000305" key="4"/>
<evidence type="ECO:0000312" key="5">
    <source>
        <dbReference type="Araport" id="AT2G24090"/>
    </source>
</evidence>
<dbReference type="EMBL" id="X87332">
    <property type="protein sequence ID" value="CAA60774.1"/>
    <property type="status" value="ALT_INIT"/>
    <property type="molecule type" value="Genomic_DNA"/>
</dbReference>
<dbReference type="EMBL" id="AC005170">
    <property type="protein sequence ID" value="AAC63677.1"/>
    <property type="status" value="ALT_SEQ"/>
    <property type="molecule type" value="Genomic_DNA"/>
</dbReference>
<dbReference type="EMBL" id="AC005967">
    <property type="protein sequence ID" value="AAM15097.1"/>
    <property type="status" value="ALT_SEQ"/>
    <property type="molecule type" value="Genomic_DNA"/>
</dbReference>
<dbReference type="EMBL" id="CP002685">
    <property type="protein sequence ID" value="AEC07528.1"/>
    <property type="molecule type" value="Genomic_DNA"/>
</dbReference>
<dbReference type="EMBL" id="AY065235">
    <property type="protein sequence ID" value="AAL38711.1"/>
    <property type="molecule type" value="mRNA"/>
</dbReference>
<dbReference type="EMBL" id="AY096532">
    <property type="protein sequence ID" value="AAM20182.1"/>
    <property type="molecule type" value="mRNA"/>
</dbReference>
<dbReference type="PIR" id="E84632">
    <property type="entry name" value="E84632"/>
</dbReference>
<dbReference type="SMR" id="Q8VZ55"/>
<dbReference type="FunCoup" id="Q8VZ55">
    <property type="interactions" value="1079"/>
</dbReference>
<dbReference type="IntAct" id="Q8VZ55">
    <property type="interactions" value="1"/>
</dbReference>
<dbReference type="STRING" id="3702.Q8VZ55"/>
<dbReference type="PaxDb" id="3702-AT2G24090.1"/>
<dbReference type="ProteomicsDB" id="236933"/>
<dbReference type="EnsemblPlants" id="AT2G24090.1">
    <property type="protein sequence ID" value="AT2G24090.1"/>
    <property type="gene ID" value="AT2G24090"/>
</dbReference>
<dbReference type="Gramene" id="AT2G24090.1">
    <property type="protein sequence ID" value="AT2G24090.1"/>
    <property type="gene ID" value="AT2G24090"/>
</dbReference>
<dbReference type="KEGG" id="ath:AT2G24090"/>
<dbReference type="Araport" id="AT2G24090"/>
<dbReference type="TAIR" id="AT2G24090">
    <property type="gene designation" value="PRPL35"/>
</dbReference>
<dbReference type="eggNOG" id="ENOG502S11I">
    <property type="taxonomic scope" value="Eukaryota"/>
</dbReference>
<dbReference type="HOGENOM" id="CLU_130670_0_0_1"/>
<dbReference type="InParanoid" id="Q8VZ55"/>
<dbReference type="OMA" id="STFFNCT"/>
<dbReference type="OrthoDB" id="162638at2759"/>
<dbReference type="PhylomeDB" id="Q8VZ55"/>
<dbReference type="PRO" id="PR:Q8VZ55"/>
<dbReference type="Proteomes" id="UP000006548">
    <property type="component" value="Chromosome 2"/>
</dbReference>
<dbReference type="ExpressionAtlas" id="Q8VZ55">
    <property type="expression patterns" value="baseline and differential"/>
</dbReference>
<dbReference type="GO" id="GO:0009507">
    <property type="term" value="C:chloroplast"/>
    <property type="evidence" value="ECO:0007005"/>
    <property type="project" value="TAIR"/>
</dbReference>
<dbReference type="GO" id="GO:1990904">
    <property type="term" value="C:ribonucleoprotein complex"/>
    <property type="evidence" value="ECO:0007669"/>
    <property type="project" value="UniProtKB-KW"/>
</dbReference>
<dbReference type="GO" id="GO:0005840">
    <property type="term" value="C:ribosome"/>
    <property type="evidence" value="ECO:0007669"/>
    <property type="project" value="UniProtKB-KW"/>
</dbReference>
<dbReference type="GO" id="GO:0003729">
    <property type="term" value="F:mRNA binding"/>
    <property type="evidence" value="ECO:0000314"/>
    <property type="project" value="TAIR"/>
</dbReference>
<dbReference type="GO" id="GO:0003735">
    <property type="term" value="F:structural constituent of ribosome"/>
    <property type="evidence" value="ECO:0007669"/>
    <property type="project" value="InterPro"/>
</dbReference>
<dbReference type="GO" id="GO:0006412">
    <property type="term" value="P:translation"/>
    <property type="evidence" value="ECO:0007669"/>
    <property type="project" value="InterPro"/>
</dbReference>
<dbReference type="FunFam" id="4.10.410.60:FF:000001">
    <property type="entry name" value="50S ribosomal protein L35"/>
    <property type="match status" value="1"/>
</dbReference>
<dbReference type="Gene3D" id="4.10.410.60">
    <property type="match status" value="1"/>
</dbReference>
<dbReference type="HAMAP" id="MF_00514">
    <property type="entry name" value="Ribosomal_bL35"/>
    <property type="match status" value="1"/>
</dbReference>
<dbReference type="InterPro" id="IPR001706">
    <property type="entry name" value="Ribosomal_bL35"/>
</dbReference>
<dbReference type="InterPro" id="IPR021137">
    <property type="entry name" value="Ribosomal_bL35-like"/>
</dbReference>
<dbReference type="InterPro" id="IPR018265">
    <property type="entry name" value="Ribosomal_bL35_CS"/>
</dbReference>
<dbReference type="InterPro" id="IPR037229">
    <property type="entry name" value="Ribosomal_bL35_sf"/>
</dbReference>
<dbReference type="NCBIfam" id="TIGR00001">
    <property type="entry name" value="rpmI_bact"/>
    <property type="match status" value="1"/>
</dbReference>
<dbReference type="PANTHER" id="PTHR33343">
    <property type="entry name" value="54S RIBOSOMAL PROTEIN BL35M"/>
    <property type="match status" value="1"/>
</dbReference>
<dbReference type="PANTHER" id="PTHR33343:SF1">
    <property type="entry name" value="LARGE RIBOSOMAL SUBUNIT PROTEIN BL35M"/>
    <property type="match status" value="1"/>
</dbReference>
<dbReference type="Pfam" id="PF01632">
    <property type="entry name" value="Ribosomal_L35p"/>
    <property type="match status" value="1"/>
</dbReference>
<dbReference type="PRINTS" id="PR00064">
    <property type="entry name" value="RIBOSOMALL35"/>
</dbReference>
<dbReference type="SUPFAM" id="SSF143034">
    <property type="entry name" value="L35p-like"/>
    <property type="match status" value="1"/>
</dbReference>
<dbReference type="PROSITE" id="PS00936">
    <property type="entry name" value="RIBOSOMAL_L35"/>
    <property type="match status" value="1"/>
</dbReference>
<keyword id="KW-0150">Chloroplast</keyword>
<keyword id="KW-0934">Plastid</keyword>
<keyword id="KW-1185">Reference proteome</keyword>
<keyword id="KW-0687">Ribonucleoprotein</keyword>
<keyword id="KW-0689">Ribosomal protein</keyword>
<keyword id="KW-0809">Transit peptide</keyword>
<organism>
    <name type="scientific">Arabidopsis thaliana</name>
    <name type="common">Mouse-ear cress</name>
    <dbReference type="NCBI Taxonomy" id="3702"/>
    <lineage>
        <taxon>Eukaryota</taxon>
        <taxon>Viridiplantae</taxon>
        <taxon>Streptophyta</taxon>
        <taxon>Embryophyta</taxon>
        <taxon>Tracheophyta</taxon>
        <taxon>Spermatophyta</taxon>
        <taxon>Magnoliopsida</taxon>
        <taxon>eudicotyledons</taxon>
        <taxon>Gunneridae</taxon>
        <taxon>Pentapetalae</taxon>
        <taxon>rosids</taxon>
        <taxon>malvids</taxon>
        <taxon>Brassicales</taxon>
        <taxon>Brassicaceae</taxon>
        <taxon>Camelineae</taxon>
        <taxon>Arabidopsis</taxon>
    </lineage>
</organism>
<reference key="1">
    <citation type="submission" date="1995-05" db="EMBL/GenBank/DDBJ databases">
        <authorList>
            <person name="Kavousi M."/>
            <person name="Subramanian A.R."/>
        </authorList>
    </citation>
    <scope>NUCLEOTIDE SEQUENCE [GENOMIC DNA]</scope>
</reference>
<reference key="2">
    <citation type="journal article" date="1999" name="Nature">
        <title>Sequence and analysis of chromosome 2 of the plant Arabidopsis thaliana.</title>
        <authorList>
            <person name="Lin X."/>
            <person name="Kaul S."/>
            <person name="Rounsley S.D."/>
            <person name="Shea T.P."/>
            <person name="Benito M.-I."/>
            <person name="Town C.D."/>
            <person name="Fujii C.Y."/>
            <person name="Mason T.M."/>
            <person name="Bowman C.L."/>
            <person name="Barnstead M.E."/>
            <person name="Feldblyum T.V."/>
            <person name="Buell C.R."/>
            <person name="Ketchum K.A."/>
            <person name="Lee J.J."/>
            <person name="Ronning C.M."/>
            <person name="Koo H.L."/>
            <person name="Moffat K.S."/>
            <person name="Cronin L.A."/>
            <person name="Shen M."/>
            <person name="Pai G."/>
            <person name="Van Aken S."/>
            <person name="Umayam L."/>
            <person name="Tallon L.J."/>
            <person name="Gill J.E."/>
            <person name="Adams M.D."/>
            <person name="Carrera A.J."/>
            <person name="Creasy T.H."/>
            <person name="Goodman H.M."/>
            <person name="Somerville C.R."/>
            <person name="Copenhaver G.P."/>
            <person name="Preuss D."/>
            <person name="Nierman W.C."/>
            <person name="White O."/>
            <person name="Eisen J.A."/>
            <person name="Salzberg S.L."/>
            <person name="Fraser C.M."/>
            <person name="Venter J.C."/>
        </authorList>
    </citation>
    <scope>NUCLEOTIDE SEQUENCE [LARGE SCALE GENOMIC DNA]</scope>
    <source>
        <strain>cv. Columbia</strain>
    </source>
</reference>
<reference key="3">
    <citation type="journal article" date="2017" name="Plant J.">
        <title>Araport11: a complete reannotation of the Arabidopsis thaliana reference genome.</title>
        <authorList>
            <person name="Cheng C.Y."/>
            <person name="Krishnakumar V."/>
            <person name="Chan A.P."/>
            <person name="Thibaud-Nissen F."/>
            <person name="Schobel S."/>
            <person name="Town C.D."/>
        </authorList>
    </citation>
    <scope>GENOME REANNOTATION</scope>
    <source>
        <strain>cv. Columbia</strain>
    </source>
</reference>
<reference key="4">
    <citation type="journal article" date="2003" name="Science">
        <title>Empirical analysis of transcriptional activity in the Arabidopsis genome.</title>
        <authorList>
            <person name="Yamada K."/>
            <person name="Lim J."/>
            <person name="Dale J.M."/>
            <person name="Chen H."/>
            <person name="Shinn P."/>
            <person name="Palm C.J."/>
            <person name="Southwick A.M."/>
            <person name="Wu H.C."/>
            <person name="Kim C.J."/>
            <person name="Nguyen M."/>
            <person name="Pham P.K."/>
            <person name="Cheuk R.F."/>
            <person name="Karlin-Newmann G."/>
            <person name="Liu S.X."/>
            <person name="Lam B."/>
            <person name="Sakano H."/>
            <person name="Wu T."/>
            <person name="Yu G."/>
            <person name="Miranda M."/>
            <person name="Quach H.L."/>
            <person name="Tripp M."/>
            <person name="Chang C.H."/>
            <person name="Lee J.M."/>
            <person name="Toriumi M.J."/>
            <person name="Chan M.M."/>
            <person name="Tang C.C."/>
            <person name="Onodera C.S."/>
            <person name="Deng J.M."/>
            <person name="Akiyama K."/>
            <person name="Ansari Y."/>
            <person name="Arakawa T."/>
            <person name="Banh J."/>
            <person name="Banno F."/>
            <person name="Bowser L."/>
            <person name="Brooks S.Y."/>
            <person name="Carninci P."/>
            <person name="Chao Q."/>
            <person name="Choy N."/>
            <person name="Enju A."/>
            <person name="Goldsmith A.D."/>
            <person name="Gurjal M."/>
            <person name="Hansen N.F."/>
            <person name="Hayashizaki Y."/>
            <person name="Johnson-Hopson C."/>
            <person name="Hsuan V.W."/>
            <person name="Iida K."/>
            <person name="Karnes M."/>
            <person name="Khan S."/>
            <person name="Koesema E."/>
            <person name="Ishida J."/>
            <person name="Jiang P.X."/>
            <person name="Jones T."/>
            <person name="Kawai J."/>
            <person name="Kamiya A."/>
            <person name="Meyers C."/>
            <person name="Nakajima M."/>
            <person name="Narusaka M."/>
            <person name="Seki M."/>
            <person name="Sakurai T."/>
            <person name="Satou M."/>
            <person name="Tamse R."/>
            <person name="Vaysberg M."/>
            <person name="Wallender E.K."/>
            <person name="Wong C."/>
            <person name="Yamamura Y."/>
            <person name="Yuan S."/>
            <person name="Shinozaki K."/>
            <person name="Davis R.W."/>
            <person name="Theologis A."/>
            <person name="Ecker J.R."/>
        </authorList>
    </citation>
    <scope>NUCLEOTIDE SEQUENCE [LARGE SCALE MRNA]</scope>
    <source>
        <strain>cv. Columbia</strain>
    </source>
</reference>
<reference key="5">
    <citation type="journal article" date="2012" name="Plant J.">
        <title>Versatile roles of Arabidopsis plastid ribosomal proteins in plant growth and development.</title>
        <authorList>
            <person name="Romani I."/>
            <person name="Tadini L."/>
            <person name="Rossi F."/>
            <person name="Masiero S."/>
            <person name="Pribil M."/>
            <person name="Jahns P."/>
            <person name="Kater M."/>
            <person name="Leister D."/>
            <person name="Pesaresi P."/>
        </authorList>
    </citation>
    <scope>DISRUPTION PHENOTYPE</scope>
</reference>
<reference key="6">
    <citation type="journal article" date="2023" name="Plant Cell">
        <title>An updated nomenclature for plant ribosomal protein genes.</title>
        <authorList>
            <person name="Scarpin M.R."/>
            <person name="Busche M."/>
            <person name="Martinez R.E."/>
            <person name="Harper L.C."/>
            <person name="Reiser L."/>
            <person name="Szakonyi D."/>
            <person name="Merchante C."/>
            <person name="Lan T."/>
            <person name="Xiong W."/>
            <person name="Mo B."/>
            <person name="Tang G."/>
            <person name="Chen X."/>
            <person name="Bailey-Serres J."/>
            <person name="Browning K.S."/>
            <person name="Brunkard J.O."/>
        </authorList>
    </citation>
    <scope>NOMENCLATURE</scope>
</reference>